<sequence>MGTGGRRGTRSGKGTEGAAATSSSCLYRCIECNREAQELYRDYSHGVLKITICKSCQKPVDKYIEYDPVIILINAILCKTQAYRHILFNTKINIHGKLCMFCLLCEAYLRWWQLQDSSQSPAPDDVIRYAKEWDFYRMFVIASFEQAAFLTGIFAFLWVQQPMTAKRAPDFVLLLKALLLSSYGKLLLIPAVIWEHDYTPLCLRLIKVFVLTSNFQAVRVTLNTNRRLSLLVVLSGLLLESIVVFFFQRMEWDVSSDCALYKSQDF</sequence>
<protein>
    <recommendedName>
        <fullName>Protein ARV1</fullName>
    </recommendedName>
</protein>
<reference key="1">
    <citation type="journal article" date="2005" name="Science">
        <title>The transcriptional landscape of the mammalian genome.</title>
        <authorList>
            <person name="Carninci P."/>
            <person name="Kasukawa T."/>
            <person name="Katayama S."/>
            <person name="Gough J."/>
            <person name="Frith M.C."/>
            <person name="Maeda N."/>
            <person name="Oyama R."/>
            <person name="Ravasi T."/>
            <person name="Lenhard B."/>
            <person name="Wells C."/>
            <person name="Kodzius R."/>
            <person name="Shimokawa K."/>
            <person name="Bajic V.B."/>
            <person name="Brenner S.E."/>
            <person name="Batalov S."/>
            <person name="Forrest A.R."/>
            <person name="Zavolan M."/>
            <person name="Davis M.J."/>
            <person name="Wilming L.G."/>
            <person name="Aidinis V."/>
            <person name="Allen J.E."/>
            <person name="Ambesi-Impiombato A."/>
            <person name="Apweiler R."/>
            <person name="Aturaliya R.N."/>
            <person name="Bailey T.L."/>
            <person name="Bansal M."/>
            <person name="Baxter L."/>
            <person name="Beisel K.W."/>
            <person name="Bersano T."/>
            <person name="Bono H."/>
            <person name="Chalk A.M."/>
            <person name="Chiu K.P."/>
            <person name="Choudhary V."/>
            <person name="Christoffels A."/>
            <person name="Clutterbuck D.R."/>
            <person name="Crowe M.L."/>
            <person name="Dalla E."/>
            <person name="Dalrymple B.P."/>
            <person name="de Bono B."/>
            <person name="Della Gatta G."/>
            <person name="di Bernardo D."/>
            <person name="Down T."/>
            <person name="Engstrom P."/>
            <person name="Fagiolini M."/>
            <person name="Faulkner G."/>
            <person name="Fletcher C.F."/>
            <person name="Fukushima T."/>
            <person name="Furuno M."/>
            <person name="Futaki S."/>
            <person name="Gariboldi M."/>
            <person name="Georgii-Hemming P."/>
            <person name="Gingeras T.R."/>
            <person name="Gojobori T."/>
            <person name="Green R.E."/>
            <person name="Gustincich S."/>
            <person name="Harbers M."/>
            <person name="Hayashi Y."/>
            <person name="Hensch T.K."/>
            <person name="Hirokawa N."/>
            <person name="Hill D."/>
            <person name="Huminiecki L."/>
            <person name="Iacono M."/>
            <person name="Ikeo K."/>
            <person name="Iwama A."/>
            <person name="Ishikawa T."/>
            <person name="Jakt M."/>
            <person name="Kanapin A."/>
            <person name="Katoh M."/>
            <person name="Kawasawa Y."/>
            <person name="Kelso J."/>
            <person name="Kitamura H."/>
            <person name="Kitano H."/>
            <person name="Kollias G."/>
            <person name="Krishnan S.P."/>
            <person name="Kruger A."/>
            <person name="Kummerfeld S.K."/>
            <person name="Kurochkin I.V."/>
            <person name="Lareau L.F."/>
            <person name="Lazarevic D."/>
            <person name="Lipovich L."/>
            <person name="Liu J."/>
            <person name="Liuni S."/>
            <person name="McWilliam S."/>
            <person name="Madan Babu M."/>
            <person name="Madera M."/>
            <person name="Marchionni L."/>
            <person name="Matsuda H."/>
            <person name="Matsuzawa S."/>
            <person name="Miki H."/>
            <person name="Mignone F."/>
            <person name="Miyake S."/>
            <person name="Morris K."/>
            <person name="Mottagui-Tabar S."/>
            <person name="Mulder N."/>
            <person name="Nakano N."/>
            <person name="Nakauchi H."/>
            <person name="Ng P."/>
            <person name="Nilsson R."/>
            <person name="Nishiguchi S."/>
            <person name="Nishikawa S."/>
            <person name="Nori F."/>
            <person name="Ohara O."/>
            <person name="Okazaki Y."/>
            <person name="Orlando V."/>
            <person name="Pang K.C."/>
            <person name="Pavan W.J."/>
            <person name="Pavesi G."/>
            <person name="Pesole G."/>
            <person name="Petrovsky N."/>
            <person name="Piazza S."/>
            <person name="Reed J."/>
            <person name="Reid J.F."/>
            <person name="Ring B.Z."/>
            <person name="Ringwald M."/>
            <person name="Rost B."/>
            <person name="Ruan Y."/>
            <person name="Salzberg S.L."/>
            <person name="Sandelin A."/>
            <person name="Schneider C."/>
            <person name="Schoenbach C."/>
            <person name="Sekiguchi K."/>
            <person name="Semple C.A."/>
            <person name="Seno S."/>
            <person name="Sessa L."/>
            <person name="Sheng Y."/>
            <person name="Shibata Y."/>
            <person name="Shimada H."/>
            <person name="Shimada K."/>
            <person name="Silva D."/>
            <person name="Sinclair B."/>
            <person name="Sperling S."/>
            <person name="Stupka E."/>
            <person name="Sugiura K."/>
            <person name="Sultana R."/>
            <person name="Takenaka Y."/>
            <person name="Taki K."/>
            <person name="Tammoja K."/>
            <person name="Tan S.L."/>
            <person name="Tang S."/>
            <person name="Taylor M.S."/>
            <person name="Tegner J."/>
            <person name="Teichmann S.A."/>
            <person name="Ueda H.R."/>
            <person name="van Nimwegen E."/>
            <person name="Verardo R."/>
            <person name="Wei C.L."/>
            <person name="Yagi K."/>
            <person name="Yamanishi H."/>
            <person name="Zabarovsky E."/>
            <person name="Zhu S."/>
            <person name="Zimmer A."/>
            <person name="Hide W."/>
            <person name="Bult C."/>
            <person name="Grimmond S.M."/>
            <person name="Teasdale R.D."/>
            <person name="Liu E.T."/>
            <person name="Brusic V."/>
            <person name="Quackenbush J."/>
            <person name="Wahlestedt C."/>
            <person name="Mattick J.S."/>
            <person name="Hume D.A."/>
            <person name="Kai C."/>
            <person name="Sasaki D."/>
            <person name="Tomaru Y."/>
            <person name="Fukuda S."/>
            <person name="Kanamori-Katayama M."/>
            <person name="Suzuki M."/>
            <person name="Aoki J."/>
            <person name="Arakawa T."/>
            <person name="Iida J."/>
            <person name="Imamura K."/>
            <person name="Itoh M."/>
            <person name="Kato T."/>
            <person name="Kawaji H."/>
            <person name="Kawagashira N."/>
            <person name="Kawashima T."/>
            <person name="Kojima M."/>
            <person name="Kondo S."/>
            <person name="Konno H."/>
            <person name="Nakano K."/>
            <person name="Ninomiya N."/>
            <person name="Nishio T."/>
            <person name="Okada M."/>
            <person name="Plessy C."/>
            <person name="Shibata K."/>
            <person name="Shiraki T."/>
            <person name="Suzuki S."/>
            <person name="Tagami M."/>
            <person name="Waki K."/>
            <person name="Watahiki A."/>
            <person name="Okamura-Oho Y."/>
            <person name="Suzuki H."/>
            <person name="Kawai J."/>
            <person name="Hayashizaki Y."/>
        </authorList>
    </citation>
    <scope>NUCLEOTIDE SEQUENCE [LARGE SCALE MRNA]</scope>
    <source>
        <strain>C57BL/6J</strain>
        <tissue>Cerebellum</tissue>
    </source>
</reference>
<reference key="2">
    <citation type="journal article" date="2010" name="J. Biol. Chem.">
        <title>Decreased expression of ARV1 results in cholesterol retention in the endoplasmic reticulum and abnormal bile acid metabolism.</title>
        <authorList>
            <person name="Tong F."/>
            <person name="Billheimer J."/>
            <person name="Shechtman C.F."/>
            <person name="Liu Y."/>
            <person name="Crooke R."/>
            <person name="Graham M."/>
            <person name="Cohen D.E."/>
            <person name="Sturley S.L."/>
            <person name="Rader D.J."/>
        </authorList>
    </citation>
    <scope>FUNCTION</scope>
    <scope>TISSUE SPECIFICITY</scope>
</reference>
<reference key="3">
    <citation type="journal article" date="2016" name="Hum. Mol. Genet.">
        <title>Neuronal deficiency of ARV1 causes an autosomal recessive epileptic encephalopathy.</title>
        <authorList>
            <person name="Palmer E.E."/>
            <person name="Jarrett K.E."/>
            <person name="Sachdev R.K."/>
            <person name="Al Zahrani F."/>
            <person name="Hashem M.O."/>
            <person name="Ibrahim N."/>
            <person name="Sampaio H."/>
            <person name="Kandula T."/>
            <person name="Macintosh R."/>
            <person name="Gupta R."/>
            <person name="Conlon D.M."/>
            <person name="Billheimer J.T."/>
            <person name="Rader D.J."/>
            <person name="Funato K."/>
            <person name="Walkey C.J."/>
            <person name="Lee C.S."/>
            <person name="Loo C."/>
            <person name="Brammah S."/>
            <person name="Elakis G."/>
            <person name="Zhu Y."/>
            <person name="Buckley M."/>
            <person name="Kirk E.P."/>
            <person name="Bye A."/>
            <person name="Alkuraya F.S."/>
            <person name="Roscioli T."/>
            <person name="Lagor W.R."/>
        </authorList>
    </citation>
    <scope>DISRUPTION PHENOTYPE</scope>
</reference>
<keyword id="KW-0153">Cholesterol metabolism</keyword>
<keyword id="KW-0256">Endoplasmic reticulum</keyword>
<keyword id="KW-0443">Lipid metabolism</keyword>
<keyword id="KW-0445">Lipid transport</keyword>
<keyword id="KW-0472">Membrane</keyword>
<keyword id="KW-1185">Reference proteome</keyword>
<keyword id="KW-0753">Steroid metabolism</keyword>
<keyword id="KW-1207">Sterol metabolism</keyword>
<keyword id="KW-0812">Transmembrane</keyword>
<keyword id="KW-1133">Transmembrane helix</keyword>
<keyword id="KW-0813">Transport</keyword>
<proteinExistence type="evidence at transcript level"/>
<name>ARV1_MOUSE</name>
<evidence type="ECO:0000250" key="1">
    <source>
        <dbReference type="UniProtKB" id="Q9H2C2"/>
    </source>
</evidence>
<evidence type="ECO:0000255" key="2"/>
<evidence type="ECO:0000269" key="3">
    <source>
    </source>
</evidence>
<evidence type="ECO:0000269" key="4">
    <source>
    </source>
</evidence>
<evidence type="ECO:0000305" key="5"/>
<accession>Q9D0U9</accession>
<accession>Q8BY08</accession>
<organism>
    <name type="scientific">Mus musculus</name>
    <name type="common">Mouse</name>
    <dbReference type="NCBI Taxonomy" id="10090"/>
    <lineage>
        <taxon>Eukaryota</taxon>
        <taxon>Metazoa</taxon>
        <taxon>Chordata</taxon>
        <taxon>Craniata</taxon>
        <taxon>Vertebrata</taxon>
        <taxon>Euteleostomi</taxon>
        <taxon>Mammalia</taxon>
        <taxon>Eutheria</taxon>
        <taxon>Euarchontoglires</taxon>
        <taxon>Glires</taxon>
        <taxon>Rodentia</taxon>
        <taxon>Myomorpha</taxon>
        <taxon>Muroidea</taxon>
        <taxon>Muridae</taxon>
        <taxon>Murinae</taxon>
        <taxon>Mus</taxon>
        <taxon>Mus</taxon>
    </lineage>
</organism>
<dbReference type="EMBL" id="AK004398">
    <property type="protein sequence ID" value="BAB23288.1"/>
    <property type="molecule type" value="mRNA"/>
</dbReference>
<dbReference type="EMBL" id="AK042561">
    <property type="protein sequence ID" value="BAC31293.1"/>
    <property type="molecule type" value="mRNA"/>
</dbReference>
<dbReference type="CCDS" id="CCDS22774.1"/>
<dbReference type="RefSeq" id="NP_001355301.1">
    <property type="nucleotide sequence ID" value="NM_001368372.1"/>
</dbReference>
<dbReference type="RefSeq" id="NP_081131.1">
    <property type="nucleotide sequence ID" value="NM_026855.5"/>
</dbReference>
<dbReference type="RefSeq" id="XP_006531400.1">
    <property type="nucleotide sequence ID" value="XM_006531337.4"/>
</dbReference>
<dbReference type="RefSeq" id="XP_006531401.1">
    <property type="nucleotide sequence ID" value="XM_006531338.2"/>
</dbReference>
<dbReference type="RefSeq" id="XP_011246798.1">
    <property type="nucleotide sequence ID" value="XM_011248496.3"/>
</dbReference>
<dbReference type="FunCoup" id="Q9D0U9">
    <property type="interactions" value="2586"/>
</dbReference>
<dbReference type="STRING" id="10090.ENSMUSP00000034463"/>
<dbReference type="PhosphoSitePlus" id="Q9D0U9"/>
<dbReference type="PaxDb" id="10090-ENSMUSP00000034463"/>
<dbReference type="ProteomicsDB" id="277240"/>
<dbReference type="Antibodypedia" id="34681">
    <property type="antibodies" value="96 antibodies from 20 providers"/>
</dbReference>
<dbReference type="DNASU" id="68865"/>
<dbReference type="Ensembl" id="ENSMUST00000034463.4">
    <property type="protein sequence ID" value="ENSMUSP00000034463.4"/>
    <property type="gene ID" value="ENSMUSG00000031982.6"/>
</dbReference>
<dbReference type="GeneID" id="68865"/>
<dbReference type="KEGG" id="mmu:68865"/>
<dbReference type="UCSC" id="uc009nxn.1">
    <property type="organism name" value="mouse"/>
</dbReference>
<dbReference type="AGR" id="MGI:1916115"/>
<dbReference type="CTD" id="64801"/>
<dbReference type="MGI" id="MGI:1916115">
    <property type="gene designation" value="Arv1"/>
</dbReference>
<dbReference type="VEuPathDB" id="HostDB:ENSMUSG00000031982"/>
<dbReference type="eggNOG" id="KOG3134">
    <property type="taxonomic scope" value="Eukaryota"/>
</dbReference>
<dbReference type="GeneTree" id="ENSGT00390000002675"/>
<dbReference type="HOGENOM" id="CLU_076722_0_0_1"/>
<dbReference type="InParanoid" id="Q9D0U9"/>
<dbReference type="OMA" id="MLDMNVK"/>
<dbReference type="OrthoDB" id="2192830at2759"/>
<dbReference type="PhylomeDB" id="Q9D0U9"/>
<dbReference type="TreeFam" id="TF105845"/>
<dbReference type="Reactome" id="R-MMU-191273">
    <property type="pathway name" value="Cholesterol biosynthesis"/>
</dbReference>
<dbReference type="BioGRID-ORCS" id="68865">
    <property type="hits" value="3 hits in 77 CRISPR screens"/>
</dbReference>
<dbReference type="ChiTaRS" id="Arv1">
    <property type="organism name" value="mouse"/>
</dbReference>
<dbReference type="PRO" id="PR:Q9D0U9"/>
<dbReference type="Proteomes" id="UP000000589">
    <property type="component" value="Chromosome 8"/>
</dbReference>
<dbReference type="RNAct" id="Q9D0U9">
    <property type="molecule type" value="protein"/>
</dbReference>
<dbReference type="Bgee" id="ENSMUSG00000031982">
    <property type="expression patterns" value="Expressed in yolk sac and 142 other cell types or tissues"/>
</dbReference>
<dbReference type="ExpressionAtlas" id="Q9D0U9">
    <property type="expression patterns" value="baseline and differential"/>
</dbReference>
<dbReference type="GO" id="GO:0005789">
    <property type="term" value="C:endoplasmic reticulum membrane"/>
    <property type="evidence" value="ECO:0000250"/>
    <property type="project" value="UniProtKB"/>
</dbReference>
<dbReference type="GO" id="GO:0008206">
    <property type="term" value="P:bile acid metabolic process"/>
    <property type="evidence" value="ECO:0000315"/>
    <property type="project" value="MGI"/>
</dbReference>
<dbReference type="GO" id="GO:0008203">
    <property type="term" value="P:cholesterol metabolic process"/>
    <property type="evidence" value="ECO:0007669"/>
    <property type="project" value="UniProtKB-KW"/>
</dbReference>
<dbReference type="GO" id="GO:0030301">
    <property type="term" value="P:cholesterol transport"/>
    <property type="evidence" value="ECO:0000266"/>
    <property type="project" value="MGI"/>
</dbReference>
<dbReference type="GO" id="GO:0032366">
    <property type="term" value="P:intracellular sterol transport"/>
    <property type="evidence" value="ECO:0007669"/>
    <property type="project" value="InterPro"/>
</dbReference>
<dbReference type="GO" id="GO:0090181">
    <property type="term" value="P:regulation of cholesterol metabolic process"/>
    <property type="evidence" value="ECO:0000315"/>
    <property type="project" value="MGI"/>
</dbReference>
<dbReference type="GO" id="GO:0032383">
    <property type="term" value="P:regulation of intracellular cholesterol transport"/>
    <property type="evidence" value="ECO:0000250"/>
    <property type="project" value="UniProtKB"/>
</dbReference>
<dbReference type="InterPro" id="IPR007290">
    <property type="entry name" value="Arv1"/>
</dbReference>
<dbReference type="PANTHER" id="PTHR14467">
    <property type="entry name" value="ARV1"/>
    <property type="match status" value="1"/>
</dbReference>
<dbReference type="PANTHER" id="PTHR14467:SF0">
    <property type="entry name" value="PROTEIN ARV1"/>
    <property type="match status" value="1"/>
</dbReference>
<dbReference type="Pfam" id="PF04161">
    <property type="entry name" value="Arv1"/>
    <property type="match status" value="1"/>
</dbReference>
<feature type="chain" id="PRO_0000228660" description="Protein ARV1">
    <location>
        <begin position="1"/>
        <end position="266"/>
    </location>
</feature>
<feature type="transmembrane region" description="Helical" evidence="2">
    <location>
        <begin position="139"/>
        <end position="159"/>
    </location>
</feature>
<feature type="transmembrane region" description="Helical" evidence="2">
    <location>
        <begin position="173"/>
        <end position="193"/>
    </location>
</feature>
<feature type="transmembrane region" description="Helical" evidence="2">
    <location>
        <begin position="228"/>
        <end position="248"/>
    </location>
</feature>
<comment type="function">
    <text evidence="3">Plays a role as a mediator in the endoplasmic reticulum (ER) cholesterol and bile acid homeostasis (PubMed:20663892). Participates in sterol transport out of the ER and distribution into plasma membranes (PubMed:20663892).</text>
</comment>
<comment type="subcellular location">
    <subcellularLocation>
        <location evidence="1">Endoplasmic reticulum membrane</location>
        <topology evidence="5">Multi-pass membrane protein</topology>
    </subcellularLocation>
</comment>
<comment type="tissue specificity">
    <text evidence="3">Ubiquitous. Highly expressed in lung.</text>
</comment>
<comment type="disruption phenotype">
    <text evidence="4">Mice show an increase in the abundance of type 1 oxidative muscle fibers in the diaphragm. Female mice show also an increase in the abundance of type 1 muscle fibers in the extensor digitorum longus. Conditional knockout in neurons leads to decreased body mass; male show reduced white adipose tissue mass while female show reduced perigonadal fat mass. Show also abnormal circling behavior and severe seizures.</text>
</comment>
<comment type="similarity">
    <text evidence="5">Belongs to the ARV1 family.</text>
</comment>
<gene>
    <name type="primary">Arv1</name>
</gene>